<reference key="1">
    <citation type="submission" date="2006-06" db="EMBL/GenBank/DDBJ databases">
        <title>Complete sequence of chromosome of Mesorhizobium sp. BNC1.</title>
        <authorList>
            <consortium name="US DOE Joint Genome Institute"/>
            <person name="Copeland A."/>
            <person name="Lucas S."/>
            <person name="Lapidus A."/>
            <person name="Barry K."/>
            <person name="Detter J.C."/>
            <person name="Glavina del Rio T."/>
            <person name="Hammon N."/>
            <person name="Israni S."/>
            <person name="Dalin E."/>
            <person name="Tice H."/>
            <person name="Pitluck S."/>
            <person name="Chertkov O."/>
            <person name="Brettin T."/>
            <person name="Bruce D."/>
            <person name="Han C."/>
            <person name="Tapia R."/>
            <person name="Gilna P."/>
            <person name="Schmutz J."/>
            <person name="Larimer F."/>
            <person name="Land M."/>
            <person name="Hauser L."/>
            <person name="Kyrpides N."/>
            <person name="Mikhailova N."/>
            <person name="Richardson P."/>
        </authorList>
    </citation>
    <scope>NUCLEOTIDE SEQUENCE [LARGE SCALE GENOMIC DNA]</scope>
    <source>
        <strain>BNC1</strain>
    </source>
</reference>
<protein>
    <recommendedName>
        <fullName evidence="1">Lipoprotein-releasing system ATP-binding protein LolD</fullName>
        <ecNumber evidence="1">7.6.2.-</ecNumber>
    </recommendedName>
</protein>
<organism>
    <name type="scientific">Chelativorans sp. (strain BNC1)</name>
    <dbReference type="NCBI Taxonomy" id="266779"/>
    <lineage>
        <taxon>Bacteria</taxon>
        <taxon>Pseudomonadati</taxon>
        <taxon>Pseudomonadota</taxon>
        <taxon>Alphaproteobacteria</taxon>
        <taxon>Hyphomicrobiales</taxon>
        <taxon>Phyllobacteriaceae</taxon>
        <taxon>Chelativorans</taxon>
    </lineage>
</organism>
<name>LOLD_CHESB</name>
<evidence type="ECO:0000255" key="1">
    <source>
        <dbReference type="HAMAP-Rule" id="MF_01708"/>
    </source>
</evidence>
<feature type="chain" id="PRO_0000272105" description="Lipoprotein-releasing system ATP-binding protein LolD">
    <location>
        <begin position="1"/>
        <end position="229"/>
    </location>
</feature>
<feature type="domain" description="ABC transporter" evidence="1">
    <location>
        <begin position="6"/>
        <end position="226"/>
    </location>
</feature>
<feature type="binding site" evidence="1">
    <location>
        <begin position="42"/>
        <end position="49"/>
    </location>
    <ligand>
        <name>ATP</name>
        <dbReference type="ChEBI" id="CHEBI:30616"/>
    </ligand>
</feature>
<proteinExistence type="inferred from homology"/>
<dbReference type="EC" id="7.6.2.-" evidence="1"/>
<dbReference type="EMBL" id="CP000390">
    <property type="protein sequence ID" value="ABG62439.1"/>
    <property type="molecule type" value="Genomic_DNA"/>
</dbReference>
<dbReference type="SMR" id="Q11JI6"/>
<dbReference type="STRING" id="266779.Meso_1042"/>
<dbReference type="KEGG" id="mes:Meso_1042"/>
<dbReference type="eggNOG" id="COG1136">
    <property type="taxonomic scope" value="Bacteria"/>
</dbReference>
<dbReference type="HOGENOM" id="CLU_000604_1_22_5"/>
<dbReference type="OrthoDB" id="9787227at2"/>
<dbReference type="GO" id="GO:0005886">
    <property type="term" value="C:plasma membrane"/>
    <property type="evidence" value="ECO:0007669"/>
    <property type="project" value="UniProtKB-SubCell"/>
</dbReference>
<dbReference type="GO" id="GO:0005524">
    <property type="term" value="F:ATP binding"/>
    <property type="evidence" value="ECO:0007669"/>
    <property type="project" value="UniProtKB-KW"/>
</dbReference>
<dbReference type="GO" id="GO:0016887">
    <property type="term" value="F:ATP hydrolysis activity"/>
    <property type="evidence" value="ECO:0007669"/>
    <property type="project" value="InterPro"/>
</dbReference>
<dbReference type="GO" id="GO:0022857">
    <property type="term" value="F:transmembrane transporter activity"/>
    <property type="evidence" value="ECO:0007669"/>
    <property type="project" value="TreeGrafter"/>
</dbReference>
<dbReference type="GO" id="GO:0044874">
    <property type="term" value="P:lipoprotein localization to outer membrane"/>
    <property type="evidence" value="ECO:0007669"/>
    <property type="project" value="TreeGrafter"/>
</dbReference>
<dbReference type="GO" id="GO:0089705">
    <property type="term" value="P:protein localization to outer membrane"/>
    <property type="evidence" value="ECO:0007669"/>
    <property type="project" value="TreeGrafter"/>
</dbReference>
<dbReference type="CDD" id="cd03255">
    <property type="entry name" value="ABC_MJ0796_LolCDE_FtsE"/>
    <property type="match status" value="1"/>
</dbReference>
<dbReference type="FunFam" id="3.40.50.300:FF:000032">
    <property type="entry name" value="Export ABC transporter ATP-binding protein"/>
    <property type="match status" value="1"/>
</dbReference>
<dbReference type="Gene3D" id="3.40.50.300">
    <property type="entry name" value="P-loop containing nucleotide triphosphate hydrolases"/>
    <property type="match status" value="1"/>
</dbReference>
<dbReference type="InterPro" id="IPR003593">
    <property type="entry name" value="AAA+_ATPase"/>
</dbReference>
<dbReference type="InterPro" id="IPR003439">
    <property type="entry name" value="ABC_transporter-like_ATP-bd"/>
</dbReference>
<dbReference type="InterPro" id="IPR017871">
    <property type="entry name" value="ABC_transporter-like_CS"/>
</dbReference>
<dbReference type="InterPro" id="IPR015854">
    <property type="entry name" value="ABC_transpr_LolD-like"/>
</dbReference>
<dbReference type="InterPro" id="IPR017911">
    <property type="entry name" value="MacB-like_ATP-bd"/>
</dbReference>
<dbReference type="InterPro" id="IPR027417">
    <property type="entry name" value="P-loop_NTPase"/>
</dbReference>
<dbReference type="PANTHER" id="PTHR24220">
    <property type="entry name" value="IMPORT ATP-BINDING PROTEIN"/>
    <property type="match status" value="1"/>
</dbReference>
<dbReference type="PANTHER" id="PTHR24220:SF689">
    <property type="entry name" value="LIPOPROTEIN-RELEASING SYSTEM ATP-BINDING PROTEIN LOLD"/>
    <property type="match status" value="1"/>
</dbReference>
<dbReference type="Pfam" id="PF00005">
    <property type="entry name" value="ABC_tran"/>
    <property type="match status" value="1"/>
</dbReference>
<dbReference type="SMART" id="SM00382">
    <property type="entry name" value="AAA"/>
    <property type="match status" value="1"/>
</dbReference>
<dbReference type="SUPFAM" id="SSF52540">
    <property type="entry name" value="P-loop containing nucleoside triphosphate hydrolases"/>
    <property type="match status" value="1"/>
</dbReference>
<dbReference type="PROSITE" id="PS00211">
    <property type="entry name" value="ABC_TRANSPORTER_1"/>
    <property type="match status" value="1"/>
</dbReference>
<dbReference type="PROSITE" id="PS50893">
    <property type="entry name" value="ABC_TRANSPORTER_2"/>
    <property type="match status" value="1"/>
</dbReference>
<dbReference type="PROSITE" id="PS51244">
    <property type="entry name" value="LOLD"/>
    <property type="match status" value="1"/>
</dbReference>
<sequence>MPTSVLELKSVDRHYVQGQNTLTILKAADFTLAPGEMVALVAPSGTGKSTLLHIAGLLEHPDGGDVIVNGQPCAGLADDRRTEIRRKEIGFVYQFHHLLPEFTAIENVMMPQLIAGLSPAEARERAGQLLAYMKLGSRTEHRPSELSGGEQQRVAIARAVANAPLVLLADEPTGNLDPVTAGYVFEALEAIVRHSGLAALIATHNEELAARMDRRVTLSDGRVVELPAK</sequence>
<keyword id="KW-0067">ATP-binding</keyword>
<keyword id="KW-0997">Cell inner membrane</keyword>
<keyword id="KW-1003">Cell membrane</keyword>
<keyword id="KW-0472">Membrane</keyword>
<keyword id="KW-0547">Nucleotide-binding</keyword>
<keyword id="KW-1278">Translocase</keyword>
<keyword id="KW-0813">Transport</keyword>
<comment type="function">
    <text evidence="1">Part of the ABC transporter complex LolCDE involved in the translocation of mature outer membrane-directed lipoproteins, from the inner membrane to the periplasmic chaperone, LolA. Responsible for the formation of the LolA-lipoprotein complex in an ATP-dependent manner.</text>
</comment>
<comment type="subunit">
    <text evidence="1">The complex is composed of two ATP-binding proteins (LolD) and two transmembrane proteins (LolC and LolE).</text>
</comment>
<comment type="subcellular location">
    <subcellularLocation>
        <location evidence="1">Cell inner membrane</location>
        <topology evidence="1">Peripheral membrane protein</topology>
    </subcellularLocation>
</comment>
<comment type="similarity">
    <text evidence="1">Belongs to the ABC transporter superfamily. Lipoprotein translocase (TC 3.A.1.125) family.</text>
</comment>
<accession>Q11JI6</accession>
<gene>
    <name evidence="1" type="primary">lolD</name>
    <name type="ordered locus">Meso_1042</name>
</gene>